<comment type="function">
    <text evidence="3 5">Trifunctional enzyme involved in UDP-beta-L-rhamnose biosynthesis, a precursor of the primary cell wall components rhamnogalacturonan I (RG-I) and rhamnogalacturonan II (RG-II). Catalyzes the dehydration of UDP-glucose to form UDP-4-dehydro-6-deoxy-D-glucose followed by the epimerization of the C3' and C5' positions of UDP-4-dehydro-6-deoxy-D-glucose to form UDP-4-keto-beta-L-rhamnose and the reduction of UDP-4-keto-beta-L-rhamnose to yield UDP-beta-L-rhamnose (PubMed:17190829). Required for the normal seed coat epidermal development (PubMed:14671019).</text>
</comment>
<comment type="catalytic activity">
    <reaction evidence="5">
        <text>UDP-alpha-D-glucose = UDP-4-dehydro-6-deoxy-alpha-D-glucose + H2O</text>
        <dbReference type="Rhea" id="RHEA:21500"/>
        <dbReference type="ChEBI" id="CHEBI:15377"/>
        <dbReference type="ChEBI" id="CHEBI:58885"/>
        <dbReference type="ChEBI" id="CHEBI:85329"/>
        <dbReference type="EC" id="4.2.1.76"/>
    </reaction>
</comment>
<comment type="cofactor">
    <cofactor evidence="10">
        <name>NAD(+)</name>
        <dbReference type="ChEBI" id="CHEBI:57540"/>
    </cofactor>
</comment>
<comment type="cofactor">
    <cofactor evidence="10">
        <name>NADP(+)</name>
        <dbReference type="ChEBI" id="CHEBI:58349"/>
    </cofactor>
</comment>
<comment type="biophysicochemical properties">
    <kinetics>
        <KM evidence="5">116 uM for UDP-glucose</KM>
        <text>kcat is 2860 sec(-1) with UDP-glucose as substrate.</text>
    </kinetics>
    <phDependence>
        <text evidence="5">Optimum pH is 7.5.</text>
    </phDependence>
    <temperatureDependence>
        <text evidence="5">Optimum temperature is 35 degrees Celsius.</text>
    </temperatureDependence>
</comment>
<comment type="pathway">
    <text evidence="9">Carbohydrate biosynthesis.</text>
</comment>
<comment type="tissue specificity">
    <text evidence="3">Expressed in roots, stems, leaves, seedlings, inflorescence tips, and siliques.</text>
</comment>
<comment type="developmental stage">
    <text evidence="4">Up-regulated at the time of mucilage production during seed coat differentiation.</text>
</comment>
<comment type="domain">
    <text evidence="5">The dehydratase activity is contained in the N-terminal region while the epimerase and reductase activities are in the C-terminal region.</text>
</comment>
<comment type="miscellaneous">
    <text>In bacteria, TDP-L-rhamnose is formed by the successive action of three different enzymes on TDP-D-glucose. In plants, on the other hand, a single polypeptide probably catalyzes all three reactions that lead to the conversion of UDP-D-glucose to UDP-L-rhamnose.</text>
</comment>
<comment type="miscellaneous">
    <text>RHM2 appears to be more highly expressed in cv. Landsberg erecta than in cv. Col-2. Transcriptions factors AP2, TTG1, and GL2 are required for maximum levels of RHM2 expression at the time of mucilage production.</text>
</comment>
<comment type="similarity">
    <text evidence="9">In the N-terminal section; belongs to the NAD(P)-dependent epimerase/dehydratase family. dTDP-glucose dehydratase subfamily.</text>
</comment>
<comment type="similarity">
    <text evidence="9">In the C-terminal section; belongs to the dTDP-4-dehydrorhamnose reductase family.</text>
</comment>
<reference key="1">
    <citation type="journal article" date="2004" name="Plant Physiol.">
        <title>RHM2 is involved in mucilage pectin synthesis and is required for the development of the seed coat in Arabidopsis.</title>
        <authorList>
            <person name="Usadel B."/>
            <person name="Kuschinsky A.M."/>
            <person name="Rosso M.G."/>
            <person name="Eckermann N."/>
            <person name="Pauly M."/>
        </authorList>
    </citation>
    <scope>NUCLEOTIDE SEQUENCE [MRNA]</scope>
    <scope>MUTAGENESIS OF ASP-96 AND GLY-193</scope>
    <scope>FUNCTION</scope>
    <scope>TISSUE SPECIFICITY</scope>
    <source>
        <strain>cv. Columbia</strain>
    </source>
</reference>
<reference key="2">
    <citation type="journal article" date="2004" name="Plant Physiol.">
        <title>MUCILAGE-MODIFIED4 encodes a putative pectin biosynthetic enzyme developmentally regulated by APETALA2, TRANSPARENT TESTA GLABRA1, and GLABRA2 in the Arabidopsis seed coat.</title>
        <authorList>
            <person name="Western T.L."/>
            <person name="Young D.S."/>
            <person name="Dean G.H."/>
            <person name="Tan W.L."/>
            <person name="Samuels A.L."/>
            <person name="Haughn G.W."/>
        </authorList>
    </citation>
    <scope>NUCLEOTIDE SEQUENCE [MRNA]</scope>
    <scope>DEVELOPMENTAL STAGE</scope>
    <source>
        <strain>cv. Col-2</strain>
        <strain>cv. Landsberg erecta</strain>
    </source>
</reference>
<reference key="3">
    <citation type="journal article" date="2000" name="Nature">
        <title>Sequence and analysis of chromosome 1 of the plant Arabidopsis thaliana.</title>
        <authorList>
            <person name="Theologis A."/>
            <person name="Ecker J.R."/>
            <person name="Palm C.J."/>
            <person name="Federspiel N.A."/>
            <person name="Kaul S."/>
            <person name="White O."/>
            <person name="Alonso J."/>
            <person name="Altafi H."/>
            <person name="Araujo R."/>
            <person name="Bowman C.L."/>
            <person name="Brooks S.Y."/>
            <person name="Buehler E."/>
            <person name="Chan A."/>
            <person name="Chao Q."/>
            <person name="Chen H."/>
            <person name="Cheuk R.F."/>
            <person name="Chin C.W."/>
            <person name="Chung M.K."/>
            <person name="Conn L."/>
            <person name="Conway A.B."/>
            <person name="Conway A.R."/>
            <person name="Creasy T.H."/>
            <person name="Dewar K."/>
            <person name="Dunn P."/>
            <person name="Etgu P."/>
            <person name="Feldblyum T.V."/>
            <person name="Feng J.-D."/>
            <person name="Fong B."/>
            <person name="Fujii C.Y."/>
            <person name="Gill J.E."/>
            <person name="Goldsmith A.D."/>
            <person name="Haas B."/>
            <person name="Hansen N.F."/>
            <person name="Hughes B."/>
            <person name="Huizar L."/>
            <person name="Hunter J.L."/>
            <person name="Jenkins J."/>
            <person name="Johnson-Hopson C."/>
            <person name="Khan S."/>
            <person name="Khaykin E."/>
            <person name="Kim C.J."/>
            <person name="Koo H.L."/>
            <person name="Kremenetskaia I."/>
            <person name="Kurtz D.B."/>
            <person name="Kwan A."/>
            <person name="Lam B."/>
            <person name="Langin-Hooper S."/>
            <person name="Lee A."/>
            <person name="Lee J.M."/>
            <person name="Lenz C.A."/>
            <person name="Li J.H."/>
            <person name="Li Y.-P."/>
            <person name="Lin X."/>
            <person name="Liu S.X."/>
            <person name="Liu Z.A."/>
            <person name="Luros J.S."/>
            <person name="Maiti R."/>
            <person name="Marziali A."/>
            <person name="Militscher J."/>
            <person name="Miranda M."/>
            <person name="Nguyen M."/>
            <person name="Nierman W.C."/>
            <person name="Osborne B.I."/>
            <person name="Pai G."/>
            <person name="Peterson J."/>
            <person name="Pham P.K."/>
            <person name="Rizzo M."/>
            <person name="Rooney T."/>
            <person name="Rowley D."/>
            <person name="Sakano H."/>
            <person name="Salzberg S.L."/>
            <person name="Schwartz J.R."/>
            <person name="Shinn P."/>
            <person name="Southwick A.M."/>
            <person name="Sun H."/>
            <person name="Tallon L.J."/>
            <person name="Tambunga G."/>
            <person name="Toriumi M.J."/>
            <person name="Town C.D."/>
            <person name="Utterback T."/>
            <person name="Van Aken S."/>
            <person name="Vaysberg M."/>
            <person name="Vysotskaia V.S."/>
            <person name="Walker M."/>
            <person name="Wu D."/>
            <person name="Yu G."/>
            <person name="Fraser C.M."/>
            <person name="Venter J.C."/>
            <person name="Davis R.W."/>
        </authorList>
    </citation>
    <scope>NUCLEOTIDE SEQUENCE [LARGE SCALE GENOMIC DNA]</scope>
    <source>
        <strain>cv. Columbia</strain>
    </source>
</reference>
<reference key="4">
    <citation type="journal article" date="2017" name="Plant J.">
        <title>Araport11: a complete reannotation of the Arabidopsis thaliana reference genome.</title>
        <authorList>
            <person name="Cheng C.Y."/>
            <person name="Krishnakumar V."/>
            <person name="Chan A.P."/>
            <person name="Thibaud-Nissen F."/>
            <person name="Schobel S."/>
            <person name="Town C.D."/>
        </authorList>
    </citation>
    <scope>GENOME REANNOTATION</scope>
    <source>
        <strain>cv. Columbia</strain>
    </source>
</reference>
<reference key="5">
    <citation type="journal article" date="2001" name="Plant Mol. Biol.">
        <title>Molecular genetics of nucleotide sugar interconversion pathways in plants.</title>
        <authorList>
            <person name="Reiter W.-D."/>
            <person name="Vanzin G.F."/>
        </authorList>
    </citation>
    <scope>IDENTIFICATION</scope>
</reference>
<reference key="6">
    <citation type="journal article" date="2004" name="Curr. Opin. Plant Biol.">
        <title>Nucleotide sugar interconversions and cell wall biosynthesis: how to bring the inside to the outside.</title>
        <authorList>
            <person name="Seifert G.J."/>
        </authorList>
    </citation>
    <scope>REVIEW</scope>
    <scope>NOMENCLATURE</scope>
</reference>
<reference key="7">
    <citation type="journal article" date="2007" name="J. Biol. Chem.">
        <title>Functional analysis of Arabidopsis thaliana RHM2/MUM4, a multidomain protein involved in UDP-D-glucose to UDP-L-rhamnose conversion.</title>
        <authorList>
            <person name="Oka T."/>
            <person name="Nemoto T."/>
            <person name="Jigami Y."/>
        </authorList>
    </citation>
    <scope>FUNCTION</scope>
    <scope>CATALYTIC ACTIVITY</scope>
    <scope>COFACTOR</scope>
    <scope>BIOPHYSICOCHEMICAL PROPERTIES</scope>
    <scope>DOMAIN</scope>
    <scope>MUTAGENESIS OF GLY-18; LYS-36; ASP-96; LYS-165; GLY-193; GLY-392; LYS-413 AND LYS-518</scope>
</reference>
<protein>
    <recommendedName>
        <fullName evidence="10">Trifunctional UDP-glucose 4,6-dehydratase/UDP-4-keto-6-deoxy-D-glucose 3,5-epimerase/UDP-4-keto-L-rhamnose-reductase RHM2</fullName>
    </recommendedName>
    <alternativeName>
        <fullName>NDP-rhamnose synthase</fullName>
    </alternativeName>
    <alternativeName>
        <fullName>Protein MUCILAGE-MODIFIED 4</fullName>
    </alternativeName>
    <alternativeName>
        <fullName>Protein RHAMNOSE BIOSYNTHESIS 2</fullName>
    </alternativeName>
    <alternativeName>
        <fullName>Rhamnose biosynthetic enzyme 2</fullName>
        <shortName>AtRHM2</shortName>
    </alternativeName>
    <alternativeName>
        <fullName>UDP-L-rhamnose synthase MUM4</fullName>
    </alternativeName>
    <domain>
        <recommendedName>
            <fullName evidence="8">UDP-glucose 4,6-dehydratase</fullName>
            <ecNumber evidence="5">4.2.1.76</ecNumber>
        </recommendedName>
    </domain>
    <domain>
        <recommendedName>
            <fullName evidence="8">UDP-4-keto-6-deoxy-D-glucose 3,5-epimerase/UDP-4-keto-L-rhamnose 4-keto-reductase</fullName>
            <ecNumber evidence="5">1.1.1.-</ecNumber>
            <ecNumber evidence="5">5.1.3.-</ecNumber>
        </recommendedName>
    </domain>
</protein>
<organism>
    <name type="scientific">Arabidopsis thaliana</name>
    <name type="common">Mouse-ear cress</name>
    <dbReference type="NCBI Taxonomy" id="3702"/>
    <lineage>
        <taxon>Eukaryota</taxon>
        <taxon>Viridiplantae</taxon>
        <taxon>Streptophyta</taxon>
        <taxon>Embryophyta</taxon>
        <taxon>Tracheophyta</taxon>
        <taxon>Spermatophyta</taxon>
        <taxon>Magnoliopsida</taxon>
        <taxon>eudicotyledons</taxon>
        <taxon>Gunneridae</taxon>
        <taxon>Pentapetalae</taxon>
        <taxon>rosids</taxon>
        <taxon>malvids</taxon>
        <taxon>Brassicales</taxon>
        <taxon>Brassicaceae</taxon>
        <taxon>Camelineae</taxon>
        <taxon>Arabidopsis</taxon>
    </lineage>
</organism>
<feature type="chain" id="PRO_0000183253" description="Trifunctional UDP-glucose 4,6-dehydratase/UDP-4-keto-6-deoxy-D-glucose 3,5-epimerase/UDP-4-keto-L-rhamnose-reductase RHM2">
    <location>
        <begin position="1"/>
        <end position="667"/>
    </location>
</feature>
<feature type="active site" description="Proton donor" evidence="1">
    <location>
        <position position="135"/>
    </location>
</feature>
<feature type="active site" description="Proton acceptor" evidence="1">
    <location>
        <position position="136"/>
    </location>
</feature>
<feature type="active site" description="Proton acceptor" evidence="1">
    <location>
        <position position="161"/>
    </location>
</feature>
<feature type="binding site" evidence="2">
    <location>
        <begin position="15"/>
        <end position="21"/>
    </location>
    <ligand>
        <name>NAD(+)</name>
        <dbReference type="ChEBI" id="CHEBI:57540"/>
    </ligand>
</feature>
<feature type="binding site" evidence="1">
    <location>
        <position position="134"/>
    </location>
    <ligand>
        <name>substrate</name>
    </ligand>
</feature>
<feature type="binding site" evidence="10">
    <location>
        <begin position="389"/>
        <end position="395"/>
    </location>
    <ligand>
        <name>NADP(+)</name>
        <dbReference type="ChEBI" id="CHEBI:58349"/>
    </ligand>
</feature>
<feature type="mutagenesis site" description="Abolishes dehydratase activity." evidence="5">
    <original>G</original>
    <variation>A</variation>
    <location>
        <position position="18"/>
    </location>
</feature>
<feature type="mutagenesis site" description="Reduces dehydratase activity." evidence="5">
    <original>K</original>
    <variation>A</variation>
    <location>
        <position position="36"/>
    </location>
</feature>
<feature type="mutagenesis site" description="In mum4-1; no extruded mucilage and seed coat defects. Abolishes dehydratase activity." evidence="3 5">
    <original>D</original>
    <variation>N</variation>
    <location>
        <position position="96"/>
    </location>
</feature>
<feature type="mutagenesis site" description="Abolishes dehydratase activity." evidence="5">
    <original>K</original>
    <variation>A</variation>
    <location>
        <position position="165"/>
    </location>
</feature>
<feature type="mutagenesis site" description="In mum4-2; no extruded mucilage and seed coat defects. Abolishes dehydratase activity." evidence="3 5">
    <original>G</original>
    <variation>R</variation>
    <location>
        <position position="193"/>
    </location>
</feature>
<feature type="mutagenesis site" description="No effect on dehydratase activity." evidence="5">
    <original>G</original>
    <variation>A</variation>
    <location>
        <position position="392"/>
    </location>
</feature>
<feature type="mutagenesis site" description="No effect on dehydratase activity." evidence="5">
    <original>K</original>
    <variation>A</variation>
    <location>
        <position position="413"/>
    </location>
</feature>
<feature type="mutagenesis site" description="No effect on dehydratase activity." evidence="5">
    <original>K</original>
    <variation>A</variation>
    <location>
        <position position="518"/>
    </location>
</feature>
<gene>
    <name evidence="7" type="primary">RHM2</name>
    <name evidence="6" type="synonym">MUM4</name>
    <name type="ordered locus">At1g53500</name>
    <name type="ORF">F22G10.13</name>
    <name type="ORF">T3F20.18</name>
</gene>
<keyword id="KW-0413">Isomerase</keyword>
<keyword id="KW-0456">Lyase</keyword>
<keyword id="KW-0511">Multifunctional enzyme</keyword>
<keyword id="KW-0520">NAD</keyword>
<keyword id="KW-0521">NADP</keyword>
<keyword id="KW-0560">Oxidoreductase</keyword>
<keyword id="KW-1185">Reference proteome</keyword>
<accession>Q9LPG6</accession>
<proteinExistence type="evidence at protein level"/>
<name>RHM2_ARATH</name>
<dbReference type="EC" id="4.2.1.76" evidence="5"/>
<dbReference type="EC" id="1.1.1.-" evidence="5"/>
<dbReference type="EC" id="5.1.3.-" evidence="5"/>
<dbReference type="EMBL" id="AJ565874">
    <property type="protein sequence ID" value="CAD92667.1"/>
    <property type="molecule type" value="mRNA"/>
</dbReference>
<dbReference type="EMBL" id="AY328518">
    <property type="protein sequence ID" value="AAP93963.1"/>
    <property type="molecule type" value="mRNA"/>
</dbReference>
<dbReference type="EMBL" id="AC018748">
    <property type="protein sequence ID" value="AAF78439.1"/>
    <property type="molecule type" value="Genomic_DNA"/>
</dbReference>
<dbReference type="EMBL" id="AC024260">
    <property type="protein sequence ID" value="AAG51981.1"/>
    <property type="molecule type" value="Genomic_DNA"/>
</dbReference>
<dbReference type="EMBL" id="CP002684">
    <property type="protein sequence ID" value="AEE32949.1"/>
    <property type="molecule type" value="Genomic_DNA"/>
</dbReference>
<dbReference type="PIR" id="B96575">
    <property type="entry name" value="B96575"/>
</dbReference>
<dbReference type="RefSeq" id="NP_564633.2">
    <property type="nucleotide sequence ID" value="NM_104228.3"/>
</dbReference>
<dbReference type="SMR" id="Q9LPG6"/>
<dbReference type="BioGRID" id="27010">
    <property type="interactions" value="3"/>
</dbReference>
<dbReference type="FunCoup" id="Q9LPG6">
    <property type="interactions" value="198"/>
</dbReference>
<dbReference type="STRING" id="3702.Q9LPG6"/>
<dbReference type="iPTMnet" id="Q9LPG6"/>
<dbReference type="PaxDb" id="3702-AT1G53500.1"/>
<dbReference type="ProteomicsDB" id="236173"/>
<dbReference type="EnsemblPlants" id="AT1G53500.1">
    <property type="protein sequence ID" value="AT1G53500.1"/>
    <property type="gene ID" value="AT1G53500"/>
</dbReference>
<dbReference type="GeneID" id="841785"/>
<dbReference type="Gramene" id="AT1G53500.1">
    <property type="protein sequence ID" value="AT1G53500.1"/>
    <property type="gene ID" value="AT1G53500"/>
</dbReference>
<dbReference type="KEGG" id="ath:AT1G53500"/>
<dbReference type="Araport" id="AT1G53500"/>
<dbReference type="TAIR" id="AT1G53500">
    <property type="gene designation" value="MUM4"/>
</dbReference>
<dbReference type="eggNOG" id="KOG0747">
    <property type="taxonomic scope" value="Eukaryota"/>
</dbReference>
<dbReference type="HOGENOM" id="CLU_026813_1_0_1"/>
<dbReference type="InParanoid" id="Q9LPG6"/>
<dbReference type="OMA" id="PRSKHEM"/>
<dbReference type="OrthoDB" id="16464at2759"/>
<dbReference type="PhylomeDB" id="Q9LPG6"/>
<dbReference type="BioCyc" id="ARA:AT1G53500-MONOMER"/>
<dbReference type="BioCyc" id="MetaCyc:AT1G53500-MONOMER"/>
<dbReference type="PRO" id="PR:Q9LPG6"/>
<dbReference type="Proteomes" id="UP000006548">
    <property type="component" value="Chromosome 1"/>
</dbReference>
<dbReference type="ExpressionAtlas" id="Q9LPG6">
    <property type="expression patterns" value="baseline and differential"/>
</dbReference>
<dbReference type="GO" id="GO:0005634">
    <property type="term" value="C:nucleus"/>
    <property type="evidence" value="ECO:0007005"/>
    <property type="project" value="TAIR"/>
</dbReference>
<dbReference type="GO" id="GO:0008460">
    <property type="term" value="F:dTDP-glucose 4,6-dehydratase activity"/>
    <property type="evidence" value="ECO:0007669"/>
    <property type="project" value="InterPro"/>
</dbReference>
<dbReference type="GO" id="GO:0010489">
    <property type="term" value="F:UDP-4-keto-6-deoxy-glucose-3,5-epimerase activity"/>
    <property type="evidence" value="ECO:0000304"/>
    <property type="project" value="TAIR"/>
</dbReference>
<dbReference type="GO" id="GO:0010490">
    <property type="term" value="F:UDP-4-keto-rhamnose-4-keto-reductase activity"/>
    <property type="evidence" value="ECO:0000304"/>
    <property type="project" value="TAIR"/>
</dbReference>
<dbReference type="GO" id="GO:0050377">
    <property type="term" value="F:UDP-glucose 4,6-dehydratase activity"/>
    <property type="evidence" value="ECO:0000314"/>
    <property type="project" value="TAIR"/>
</dbReference>
<dbReference type="GO" id="GO:0010280">
    <property type="term" value="F:UDP-L-rhamnose synthase activity"/>
    <property type="evidence" value="ECO:0000314"/>
    <property type="project" value="TAIR"/>
</dbReference>
<dbReference type="GO" id="GO:0010192">
    <property type="term" value="P:mucilage biosynthetic process"/>
    <property type="evidence" value="ECO:0000315"/>
    <property type="project" value="TAIR"/>
</dbReference>
<dbReference type="GO" id="GO:0010214">
    <property type="term" value="P:seed coat development"/>
    <property type="evidence" value="ECO:0000315"/>
    <property type="project" value="TAIR"/>
</dbReference>
<dbReference type="GO" id="GO:0010253">
    <property type="term" value="P:UDP-rhamnose biosynthetic process"/>
    <property type="evidence" value="ECO:0000314"/>
    <property type="project" value="TAIR"/>
</dbReference>
<dbReference type="CDD" id="cd05246">
    <property type="entry name" value="dTDP_GD_SDR_e"/>
    <property type="match status" value="1"/>
</dbReference>
<dbReference type="FunFam" id="3.40.50.720:FF:000236">
    <property type="entry name" value="Bifunctional dTDP-4-dehydrorhamnose 3,5-epimerase/dTDP-4-dehydrorhamnose reductase"/>
    <property type="match status" value="1"/>
</dbReference>
<dbReference type="FunFam" id="3.40.50.720:FF:000304">
    <property type="entry name" value="UDP-glucose 4,6-dehydratase"/>
    <property type="match status" value="1"/>
</dbReference>
<dbReference type="Gene3D" id="3.40.50.720">
    <property type="entry name" value="NAD(P)-binding Rossmann-like Domain"/>
    <property type="match status" value="2"/>
</dbReference>
<dbReference type="Gene3D" id="3.90.25.10">
    <property type="entry name" value="UDP-galactose 4-epimerase, domain 1"/>
    <property type="match status" value="1"/>
</dbReference>
<dbReference type="InterPro" id="IPR005888">
    <property type="entry name" value="dTDP_Gluc_deHydtase"/>
</dbReference>
<dbReference type="InterPro" id="IPR016040">
    <property type="entry name" value="NAD(P)-bd_dom"/>
</dbReference>
<dbReference type="InterPro" id="IPR036291">
    <property type="entry name" value="NAD(P)-bd_dom_sf"/>
</dbReference>
<dbReference type="InterPro" id="IPR029903">
    <property type="entry name" value="RmlD-like-bd"/>
</dbReference>
<dbReference type="NCBIfam" id="TIGR01181">
    <property type="entry name" value="dTDP_gluc_dehyt"/>
    <property type="match status" value="1"/>
</dbReference>
<dbReference type="PANTHER" id="PTHR43000">
    <property type="entry name" value="DTDP-D-GLUCOSE 4,6-DEHYDRATASE-RELATED"/>
    <property type="match status" value="1"/>
</dbReference>
<dbReference type="Pfam" id="PF16363">
    <property type="entry name" value="GDP_Man_Dehyd"/>
    <property type="match status" value="1"/>
</dbReference>
<dbReference type="Pfam" id="PF04321">
    <property type="entry name" value="RmlD_sub_bind"/>
    <property type="match status" value="1"/>
</dbReference>
<dbReference type="SUPFAM" id="SSF51735">
    <property type="entry name" value="NAD(P)-binding Rossmann-fold domains"/>
    <property type="match status" value="2"/>
</dbReference>
<evidence type="ECO:0000250" key="1"/>
<evidence type="ECO:0000255" key="2"/>
<evidence type="ECO:0000269" key="3">
    <source>
    </source>
</evidence>
<evidence type="ECO:0000269" key="4">
    <source>
    </source>
</evidence>
<evidence type="ECO:0000269" key="5">
    <source>
    </source>
</evidence>
<evidence type="ECO:0000303" key="6">
    <source>
    </source>
</evidence>
<evidence type="ECO:0000303" key="7">
    <source>
    </source>
</evidence>
<evidence type="ECO:0000303" key="8">
    <source>
    </source>
</evidence>
<evidence type="ECO:0000305" key="9"/>
<evidence type="ECO:0000305" key="10">
    <source>
    </source>
</evidence>
<sequence length="667" mass="75226">MDDTTYKPKNILITGAAGFIASHVANRLIRNYPDYKIVVLDKLDYCSDLKNLDPSFSSPNFKFVKGDIASDDLVNYLLITENIDTIMHFAAQTHVDNSFGNSFEFTKNNIYGTHVLLEACKVTGQIRRFIHVSTDEVYGETDEDAAVGNHEASQLLPTNPYSATKAGAEMLVMAYGRSYGLPVITTRGNNVYGPNQFPEKMIPKFILLAMSGKPLPIHGDGSNVRSYLYCEDVAEAFEVVLHKGEIGHVYNVGTKRERRVIDVARDICKLFGKDPESSIQFVENRPFNDQRYFLDDQKLKKLGWQERTNWEDGLKKTMDWYTQNPEWWGDVSGALLPHPRMLMMPGGRLSDGSSEKKDVSSNTVQTFTVVTPKNGDSGDKASLKFLIYGKTGWLGGLLGKLCEKQGITYEYGKGRLEDRASLVADIRSIKPTHVFNAAGLTGRPNVDWCESHKPETIRVNVAGTLTLADVCRENDLLMMNFATGCIFEYDATHPEGSGIGFKEEDKPNFFGSFYSKTKAMVEELLREFDNVCTLRVRMPISSDLNNPRNFITKISRYNKVVDIPNSMTVLDELLPISIEMAKRNLRGIWNFTNPGVVSHNEILEMYKNYIEPGFKWSNFTVEEQAKVIVAARSNNEMDGSKLSKEFPEMLSIKESLLKYVFEPNKRT</sequence>